<evidence type="ECO:0000250" key="1"/>
<evidence type="ECO:0000256" key="2">
    <source>
        <dbReference type="SAM" id="MobiDB-lite"/>
    </source>
</evidence>
<evidence type="ECO:0000305" key="3"/>
<comment type="function">
    <text evidence="1">Component of the Mediator complex, a coactivator involved in the regulated transcription of nearly all RNA polymerase II-dependent genes. Mediator functions as a bridge to convey information from gene-specific regulatory proteins to the basal RNA polymerase II transcription machinery. Mediator is recruited to promoters by direct interactions with regulatory proteins and serves as a scaffold for the assembly of a functional preinitiation complex with RNA polymerase II and the general transcription factors (By similarity).</text>
</comment>
<comment type="subunit">
    <text evidence="1">Component of the Mediator complex.</text>
</comment>
<comment type="subcellular location">
    <subcellularLocation>
        <location evidence="1">Nucleus</location>
    </subcellularLocation>
</comment>
<comment type="similarity">
    <text evidence="3">Belongs to the Mediator complex subunit 17 family.</text>
</comment>
<gene>
    <name type="primary">srb4</name>
    <name type="synonym">med17</name>
    <name type="ORF">AN3224</name>
</gene>
<accession>Q5B8A6</accession>
<accession>C8VI82</accession>
<reference key="1">
    <citation type="journal article" date="2005" name="Nature">
        <title>Sequencing of Aspergillus nidulans and comparative analysis with A. fumigatus and A. oryzae.</title>
        <authorList>
            <person name="Galagan J.E."/>
            <person name="Calvo S.E."/>
            <person name="Cuomo C."/>
            <person name="Ma L.-J."/>
            <person name="Wortman J.R."/>
            <person name="Batzoglou S."/>
            <person name="Lee S.-I."/>
            <person name="Bastuerkmen M."/>
            <person name="Spevak C.C."/>
            <person name="Clutterbuck J."/>
            <person name="Kapitonov V."/>
            <person name="Jurka J."/>
            <person name="Scazzocchio C."/>
            <person name="Farman M.L."/>
            <person name="Butler J."/>
            <person name="Purcell S."/>
            <person name="Harris S."/>
            <person name="Braus G.H."/>
            <person name="Draht O."/>
            <person name="Busch S."/>
            <person name="D'Enfert C."/>
            <person name="Bouchier C."/>
            <person name="Goldman G.H."/>
            <person name="Bell-Pedersen D."/>
            <person name="Griffiths-Jones S."/>
            <person name="Doonan J.H."/>
            <person name="Yu J."/>
            <person name="Vienken K."/>
            <person name="Pain A."/>
            <person name="Freitag M."/>
            <person name="Selker E.U."/>
            <person name="Archer D.B."/>
            <person name="Penalva M.A."/>
            <person name="Oakley B.R."/>
            <person name="Momany M."/>
            <person name="Tanaka T."/>
            <person name="Kumagai T."/>
            <person name="Asai K."/>
            <person name="Machida M."/>
            <person name="Nierman W.C."/>
            <person name="Denning D.W."/>
            <person name="Caddick M.X."/>
            <person name="Hynes M."/>
            <person name="Paoletti M."/>
            <person name="Fischer R."/>
            <person name="Miller B.L."/>
            <person name="Dyer P.S."/>
            <person name="Sachs M.S."/>
            <person name="Osmani S.A."/>
            <person name="Birren B.W."/>
        </authorList>
    </citation>
    <scope>NUCLEOTIDE SEQUENCE [LARGE SCALE GENOMIC DNA]</scope>
    <source>
        <strain>FGSC A4 / ATCC 38163 / CBS 112.46 / NRRL 194 / M139</strain>
    </source>
</reference>
<reference key="2">
    <citation type="journal article" date="2009" name="Fungal Genet. Biol.">
        <title>The 2008 update of the Aspergillus nidulans genome annotation: a community effort.</title>
        <authorList>
            <person name="Wortman J.R."/>
            <person name="Gilsenan J.M."/>
            <person name="Joardar V."/>
            <person name="Deegan J."/>
            <person name="Clutterbuck J."/>
            <person name="Andersen M.R."/>
            <person name="Archer D."/>
            <person name="Bencina M."/>
            <person name="Braus G."/>
            <person name="Coutinho P."/>
            <person name="von Dohren H."/>
            <person name="Doonan J."/>
            <person name="Driessen A.J."/>
            <person name="Durek P."/>
            <person name="Espeso E."/>
            <person name="Fekete E."/>
            <person name="Flipphi M."/>
            <person name="Estrada C.G."/>
            <person name="Geysens S."/>
            <person name="Goldman G."/>
            <person name="de Groot P.W."/>
            <person name="Hansen K."/>
            <person name="Harris S.D."/>
            <person name="Heinekamp T."/>
            <person name="Helmstaedt K."/>
            <person name="Henrissat B."/>
            <person name="Hofmann G."/>
            <person name="Homan T."/>
            <person name="Horio T."/>
            <person name="Horiuchi H."/>
            <person name="James S."/>
            <person name="Jones M."/>
            <person name="Karaffa L."/>
            <person name="Karanyi Z."/>
            <person name="Kato M."/>
            <person name="Keller N."/>
            <person name="Kelly D.E."/>
            <person name="Kiel J.A."/>
            <person name="Kim J.M."/>
            <person name="van der Klei I.J."/>
            <person name="Klis F.M."/>
            <person name="Kovalchuk A."/>
            <person name="Krasevec N."/>
            <person name="Kubicek C.P."/>
            <person name="Liu B."/>
            <person name="Maccabe A."/>
            <person name="Meyer V."/>
            <person name="Mirabito P."/>
            <person name="Miskei M."/>
            <person name="Mos M."/>
            <person name="Mullins J."/>
            <person name="Nelson D.R."/>
            <person name="Nielsen J."/>
            <person name="Oakley B.R."/>
            <person name="Osmani S.A."/>
            <person name="Pakula T."/>
            <person name="Paszewski A."/>
            <person name="Paulsen I."/>
            <person name="Pilsyk S."/>
            <person name="Pocsi I."/>
            <person name="Punt P.J."/>
            <person name="Ram A.F."/>
            <person name="Ren Q."/>
            <person name="Robellet X."/>
            <person name="Robson G."/>
            <person name="Seiboth B."/>
            <person name="van Solingen P."/>
            <person name="Specht T."/>
            <person name="Sun J."/>
            <person name="Taheri-Talesh N."/>
            <person name="Takeshita N."/>
            <person name="Ussery D."/>
            <person name="vanKuyk P.A."/>
            <person name="Visser H."/>
            <person name="van de Vondervoort P.J."/>
            <person name="de Vries R.P."/>
            <person name="Walton J."/>
            <person name="Xiang X."/>
            <person name="Xiong Y."/>
            <person name="Zeng A.P."/>
            <person name="Brandt B.W."/>
            <person name="Cornell M.J."/>
            <person name="van den Hondel C.A."/>
            <person name="Visser J."/>
            <person name="Oliver S.G."/>
            <person name="Turner G."/>
        </authorList>
    </citation>
    <scope>GENOME REANNOTATION</scope>
    <source>
        <strain>FGSC A4 / ATCC 38163 / CBS 112.46 / NRRL 194 / M139</strain>
    </source>
</reference>
<protein>
    <recommendedName>
        <fullName>Mediator of RNA polymerase II transcription subunit 17</fullName>
    </recommendedName>
    <alternativeName>
        <fullName>Mediator complex subunit 17</fullName>
    </alternativeName>
</protein>
<keyword id="KW-0010">Activator</keyword>
<keyword id="KW-0539">Nucleus</keyword>
<keyword id="KW-1185">Reference proteome</keyword>
<keyword id="KW-0804">Transcription</keyword>
<keyword id="KW-0805">Transcription regulation</keyword>
<dbReference type="EMBL" id="AACD01000054">
    <property type="protein sequence ID" value="EAA63125.1"/>
    <property type="molecule type" value="Genomic_DNA"/>
</dbReference>
<dbReference type="EMBL" id="BN001306">
    <property type="protein sequence ID" value="CBF83151.1"/>
    <property type="molecule type" value="Genomic_DNA"/>
</dbReference>
<dbReference type="RefSeq" id="XP_660828.1">
    <property type="nucleotide sequence ID" value="XM_655736.1"/>
</dbReference>
<dbReference type="SMR" id="Q5B8A6"/>
<dbReference type="FunCoup" id="Q5B8A6">
    <property type="interactions" value="141"/>
</dbReference>
<dbReference type="STRING" id="227321.Q5B8A6"/>
<dbReference type="EnsemblFungi" id="CBF83151">
    <property type="protein sequence ID" value="CBF83151"/>
    <property type="gene ID" value="ANIA_03224"/>
</dbReference>
<dbReference type="KEGG" id="ani:ANIA_03224"/>
<dbReference type="VEuPathDB" id="FungiDB:AN3224"/>
<dbReference type="eggNOG" id="ENOG502QS9H">
    <property type="taxonomic scope" value="Eukaryota"/>
</dbReference>
<dbReference type="HOGENOM" id="CLU_015164_1_0_1"/>
<dbReference type="InParanoid" id="Q5B8A6"/>
<dbReference type="OMA" id="AAETKYW"/>
<dbReference type="OrthoDB" id="5319830at2759"/>
<dbReference type="Proteomes" id="UP000000560">
    <property type="component" value="Chromosome VI"/>
</dbReference>
<dbReference type="GO" id="GO:0070847">
    <property type="term" value="C:core mediator complex"/>
    <property type="evidence" value="ECO:0000318"/>
    <property type="project" value="GO_Central"/>
</dbReference>
<dbReference type="GO" id="GO:0016592">
    <property type="term" value="C:mediator complex"/>
    <property type="evidence" value="ECO:0000318"/>
    <property type="project" value="GO_Central"/>
</dbReference>
<dbReference type="GO" id="GO:0003712">
    <property type="term" value="F:transcription coregulator activity"/>
    <property type="evidence" value="ECO:0000318"/>
    <property type="project" value="GO_Central"/>
</dbReference>
<dbReference type="GO" id="GO:0006357">
    <property type="term" value="P:regulation of transcription by RNA polymerase II"/>
    <property type="evidence" value="ECO:0000318"/>
    <property type="project" value="GO_Central"/>
</dbReference>
<dbReference type="Gene3D" id="6.10.250.2620">
    <property type="match status" value="1"/>
</dbReference>
<dbReference type="InterPro" id="IPR019313">
    <property type="entry name" value="Mediator_Med17"/>
</dbReference>
<dbReference type="PANTHER" id="PTHR13114">
    <property type="entry name" value="MEDIATOR OF RNA POLYMERASE II TRANSCRIPTION SUBUNIT 17"/>
    <property type="match status" value="1"/>
</dbReference>
<dbReference type="PANTHER" id="PTHR13114:SF7">
    <property type="entry name" value="MEDIATOR OF RNA POLYMERASE II TRANSCRIPTION SUBUNIT 17"/>
    <property type="match status" value="1"/>
</dbReference>
<dbReference type="Pfam" id="PF10156">
    <property type="entry name" value="Med17"/>
    <property type="match status" value="1"/>
</dbReference>
<proteinExistence type="inferred from homology"/>
<organism>
    <name type="scientific">Emericella nidulans (strain FGSC A4 / ATCC 38163 / CBS 112.46 / NRRL 194 / M139)</name>
    <name type="common">Aspergillus nidulans</name>
    <dbReference type="NCBI Taxonomy" id="227321"/>
    <lineage>
        <taxon>Eukaryota</taxon>
        <taxon>Fungi</taxon>
        <taxon>Dikarya</taxon>
        <taxon>Ascomycota</taxon>
        <taxon>Pezizomycotina</taxon>
        <taxon>Eurotiomycetes</taxon>
        <taxon>Eurotiomycetidae</taxon>
        <taxon>Eurotiales</taxon>
        <taxon>Aspergillaceae</taxon>
        <taxon>Aspergillus</taxon>
        <taxon>Aspergillus subgen. Nidulantes</taxon>
    </lineage>
</organism>
<feature type="chain" id="PRO_0000304716" description="Mediator of RNA polymerase II transcription subunit 17">
    <location>
        <begin position="1"/>
        <end position="632"/>
    </location>
</feature>
<feature type="region of interest" description="Disordered" evidence="2">
    <location>
        <begin position="1"/>
        <end position="21"/>
    </location>
</feature>
<feature type="region of interest" description="Disordered" evidence="2">
    <location>
        <begin position="50"/>
        <end position="72"/>
    </location>
</feature>
<feature type="compositionally biased region" description="Basic and acidic residues" evidence="2">
    <location>
        <begin position="11"/>
        <end position="21"/>
    </location>
</feature>
<feature type="compositionally biased region" description="Acidic residues" evidence="2">
    <location>
        <begin position="58"/>
        <end position="72"/>
    </location>
</feature>
<sequence>MSDSFTVSLRPIREKRDRPDSLPREIAQINAQWGSFRELSEAKLREMIEEDKHKDHWEEDDEGDKESTDLETSEQLDQLYKRRAEIIQYALQAHMEASFALDFVSLLLSKHQPRQAETSMSPFLKSAAPLGSLNSEVVNPPPRPDSTLKDIKSVARGWRLQNFNSAADKLLNAGSRLETEVNSETKYWNEVLAVKEKGWKICRLPRESQALGVQYGFLEATPIFRDRGLAALRRTDDGSLFLDKGLIPLKSQGVRVRVRRGDRIVGCSKVCRPPQDAESIESRILQARDTVFEEELFYEVMREARILGTQGVKTRQNLVQVPVSDEQEILLDLVDWDQDRDPDAADSTEQDVFADAVAHSIRILLTYAHRQNLRRRTQPPPPLAPKRRPVPEYHILRPIMAYLQHKSHIQWLESLINDLRGVLQSAGIPCDFKATQFSSIGTLQPSNQVPKVEAVAGVFLAPFLSTFSGNLVTPQSSFRIQIRTNLAVPPFGTFYELSVNLPQYPDVQPPNHVGLQDEVSAILTHVIMLDIAAAIPLQCRDTADKEAKERVSWDVDYPHHGELHFLSRNGQSRKMKISLSRQELTIETYQLNRMRGVTPGAATSPTLWQTWRADSPETRPTLSEFVAQASQP</sequence>
<name>MED17_EMENI</name>